<proteinExistence type="inferred from homology"/>
<comment type="catalytic activity">
    <reaction evidence="1">
        <text>tRNA(Leu) + L-leucine + ATP = L-leucyl-tRNA(Leu) + AMP + diphosphate</text>
        <dbReference type="Rhea" id="RHEA:11688"/>
        <dbReference type="Rhea" id="RHEA-COMP:9613"/>
        <dbReference type="Rhea" id="RHEA-COMP:9622"/>
        <dbReference type="ChEBI" id="CHEBI:30616"/>
        <dbReference type="ChEBI" id="CHEBI:33019"/>
        <dbReference type="ChEBI" id="CHEBI:57427"/>
        <dbReference type="ChEBI" id="CHEBI:78442"/>
        <dbReference type="ChEBI" id="CHEBI:78494"/>
        <dbReference type="ChEBI" id="CHEBI:456215"/>
        <dbReference type="EC" id="6.1.1.4"/>
    </reaction>
</comment>
<comment type="subcellular location">
    <subcellularLocation>
        <location evidence="1">Cytoplasm</location>
    </subcellularLocation>
</comment>
<comment type="similarity">
    <text evidence="1">Belongs to the class-I aminoacyl-tRNA synthetase family.</text>
</comment>
<sequence length="807" mass="93884">MYNHKEIEKKWQKIWDQSKAFKTGNKSDKKYYVLDMFPYPSGSGLHVGHPEGYTATDIIARFKRLKGFDVLHPMGWDAFGLPAEQYAISTGNNPNEFTQKNIATFKKQIKSLGLSYDFDKEVNTTDPKFYEQTQWIFKELYKKGLAVLADIDVNWCEELGTVLANEEVLIDKDGNKVSERGSFPVVKKKMRQWVLKITNYADKLLEGLEDLDWENSLKLLQKNWIGKSTGTKVKFALELLDESIEVFTTRIETIFGATFLTISPEHPLVEKIVTSENKEKVKDFIKEFEKLDDRQKADKNEKNGIFTGSYAINPFNQKKIPIWIGDFVLLSYGTGAIMSVPAHDKRDYEFANKYGLEIKQVIVSKENVELPYLESGHLINSSEFNGLSSKEAIEKLNQYVEKNNLGQVETFYKLRDWIFSRQRYWGEPFPVAFDDENNVYLIDGLVELPFMENIKPSKNGQSPLFNNKKWLYFEKDGKKLTRETNTMPQWAGSNWYYLAYILKNADGSYEKLDSEEAKKRFKKWLPVDLYIGGQEHAVLHLLYSRFWHRFLYDIGVVPTKEPFQKVVNQGMILGTDGQKMSKSRGNIINPSEIVDELGADTLRVYEMFMGPLTDDKDWQVESIKGIRKWLERVYRLFEMFFDGQKTIEKSNEDHLILSQYNKLIKEIENEVELLKFNTAISKLMVFVNLLYKVEKIPSWEILKNFALILSLFAPHIAEELLEKMNQKQVKDQIWPTYDPTYLESNLTKYVIQINGKVRAIVDFELDKTQEEVLAKAMQIEKIKTLLENKNIIKVIFVANKVLNLIVK</sequence>
<evidence type="ECO:0000255" key="1">
    <source>
        <dbReference type="HAMAP-Rule" id="MF_00049"/>
    </source>
</evidence>
<accession>Q98RB6</accession>
<protein>
    <recommendedName>
        <fullName evidence="1">Leucine--tRNA ligase</fullName>
        <ecNumber evidence="1">6.1.1.4</ecNumber>
    </recommendedName>
    <alternativeName>
        <fullName evidence="1">Leucyl-tRNA synthetase</fullName>
        <shortName evidence="1">LeuRS</shortName>
    </alternativeName>
</protein>
<feature type="chain" id="PRO_0000152051" description="Leucine--tRNA ligase">
    <location>
        <begin position="1"/>
        <end position="807"/>
    </location>
</feature>
<feature type="short sequence motif" description="'HIGH' region">
    <location>
        <begin position="38"/>
        <end position="49"/>
    </location>
</feature>
<feature type="short sequence motif" description="'KMSKS' region">
    <location>
        <begin position="579"/>
        <end position="583"/>
    </location>
</feature>
<feature type="binding site" evidence="1">
    <location>
        <position position="582"/>
    </location>
    <ligand>
        <name>ATP</name>
        <dbReference type="ChEBI" id="CHEBI:30616"/>
    </ligand>
</feature>
<organism>
    <name type="scientific">Mycoplasmopsis pulmonis (strain UAB CTIP)</name>
    <name type="common">Mycoplasma pulmonis</name>
    <dbReference type="NCBI Taxonomy" id="272635"/>
    <lineage>
        <taxon>Bacteria</taxon>
        <taxon>Bacillati</taxon>
        <taxon>Mycoplasmatota</taxon>
        <taxon>Mycoplasmoidales</taxon>
        <taxon>Metamycoplasmataceae</taxon>
        <taxon>Mycoplasmopsis</taxon>
    </lineage>
</organism>
<name>SYL_MYCPU</name>
<dbReference type="EC" id="6.1.1.4" evidence="1"/>
<dbReference type="EMBL" id="AL445563">
    <property type="protein sequence ID" value="CAC13266.1"/>
    <property type="molecule type" value="Genomic_DNA"/>
</dbReference>
<dbReference type="PIR" id="E90523">
    <property type="entry name" value="E90523"/>
</dbReference>
<dbReference type="RefSeq" id="WP_010924897.1">
    <property type="nucleotide sequence ID" value="NC_002771.1"/>
</dbReference>
<dbReference type="SMR" id="Q98RB6"/>
<dbReference type="STRING" id="272635.gene:17576673"/>
<dbReference type="KEGG" id="mpu:MYPU_0930"/>
<dbReference type="eggNOG" id="COG0495">
    <property type="taxonomic scope" value="Bacteria"/>
</dbReference>
<dbReference type="HOGENOM" id="CLU_004427_0_0_14"/>
<dbReference type="BioCyc" id="MPUL272635:G1GT6-91-MONOMER"/>
<dbReference type="Proteomes" id="UP000000528">
    <property type="component" value="Chromosome"/>
</dbReference>
<dbReference type="GO" id="GO:0005829">
    <property type="term" value="C:cytosol"/>
    <property type="evidence" value="ECO:0007669"/>
    <property type="project" value="TreeGrafter"/>
</dbReference>
<dbReference type="GO" id="GO:0002161">
    <property type="term" value="F:aminoacyl-tRNA deacylase activity"/>
    <property type="evidence" value="ECO:0007669"/>
    <property type="project" value="InterPro"/>
</dbReference>
<dbReference type="GO" id="GO:0005524">
    <property type="term" value="F:ATP binding"/>
    <property type="evidence" value="ECO:0007669"/>
    <property type="project" value="UniProtKB-UniRule"/>
</dbReference>
<dbReference type="GO" id="GO:0004823">
    <property type="term" value="F:leucine-tRNA ligase activity"/>
    <property type="evidence" value="ECO:0007669"/>
    <property type="project" value="UniProtKB-UniRule"/>
</dbReference>
<dbReference type="GO" id="GO:0006429">
    <property type="term" value="P:leucyl-tRNA aminoacylation"/>
    <property type="evidence" value="ECO:0007669"/>
    <property type="project" value="UniProtKB-UniRule"/>
</dbReference>
<dbReference type="CDD" id="cd07958">
    <property type="entry name" value="Anticodon_Ia_Leu_BEm"/>
    <property type="match status" value="1"/>
</dbReference>
<dbReference type="CDD" id="cd00812">
    <property type="entry name" value="LeuRS_core"/>
    <property type="match status" value="1"/>
</dbReference>
<dbReference type="FunFam" id="1.10.730.10:FF:000002">
    <property type="entry name" value="Leucine--tRNA ligase"/>
    <property type="match status" value="1"/>
</dbReference>
<dbReference type="FunFam" id="3.40.50.620:FF:000056">
    <property type="entry name" value="Leucine--tRNA ligase"/>
    <property type="match status" value="1"/>
</dbReference>
<dbReference type="FunFam" id="3.40.50.620:FF:000077">
    <property type="entry name" value="Leucine--tRNA ligase"/>
    <property type="match status" value="1"/>
</dbReference>
<dbReference type="Gene3D" id="3.10.20.590">
    <property type="match status" value="1"/>
</dbReference>
<dbReference type="Gene3D" id="3.40.50.620">
    <property type="entry name" value="HUPs"/>
    <property type="match status" value="2"/>
</dbReference>
<dbReference type="Gene3D" id="1.10.730.10">
    <property type="entry name" value="Isoleucyl-tRNA Synthetase, Domain 1"/>
    <property type="match status" value="1"/>
</dbReference>
<dbReference type="HAMAP" id="MF_00049_B">
    <property type="entry name" value="Leu_tRNA_synth_B"/>
    <property type="match status" value="1"/>
</dbReference>
<dbReference type="InterPro" id="IPR002300">
    <property type="entry name" value="aa-tRNA-synth_Ia"/>
</dbReference>
<dbReference type="InterPro" id="IPR002302">
    <property type="entry name" value="Leu-tRNA-ligase"/>
</dbReference>
<dbReference type="InterPro" id="IPR025709">
    <property type="entry name" value="Leu_tRNA-synth_edit"/>
</dbReference>
<dbReference type="InterPro" id="IPR013155">
    <property type="entry name" value="M/V/L/I-tRNA-synth_anticd-bd"/>
</dbReference>
<dbReference type="InterPro" id="IPR015413">
    <property type="entry name" value="Methionyl/Leucyl_tRNA_Synth"/>
</dbReference>
<dbReference type="InterPro" id="IPR014729">
    <property type="entry name" value="Rossmann-like_a/b/a_fold"/>
</dbReference>
<dbReference type="InterPro" id="IPR009080">
    <property type="entry name" value="tRNAsynth_Ia_anticodon-bd"/>
</dbReference>
<dbReference type="InterPro" id="IPR009008">
    <property type="entry name" value="Val/Leu/Ile-tRNA-synth_edit"/>
</dbReference>
<dbReference type="NCBIfam" id="TIGR00396">
    <property type="entry name" value="leuS_bact"/>
    <property type="match status" value="1"/>
</dbReference>
<dbReference type="PANTHER" id="PTHR43740:SF2">
    <property type="entry name" value="LEUCINE--TRNA LIGASE, MITOCHONDRIAL"/>
    <property type="match status" value="1"/>
</dbReference>
<dbReference type="PANTHER" id="PTHR43740">
    <property type="entry name" value="LEUCYL-TRNA SYNTHETASE"/>
    <property type="match status" value="1"/>
</dbReference>
<dbReference type="Pfam" id="PF08264">
    <property type="entry name" value="Anticodon_1"/>
    <property type="match status" value="1"/>
</dbReference>
<dbReference type="Pfam" id="PF00133">
    <property type="entry name" value="tRNA-synt_1"/>
    <property type="match status" value="1"/>
</dbReference>
<dbReference type="Pfam" id="PF13603">
    <property type="entry name" value="tRNA-synt_1_2"/>
    <property type="match status" value="1"/>
</dbReference>
<dbReference type="Pfam" id="PF09334">
    <property type="entry name" value="tRNA-synt_1g"/>
    <property type="match status" value="1"/>
</dbReference>
<dbReference type="PRINTS" id="PR00985">
    <property type="entry name" value="TRNASYNTHLEU"/>
</dbReference>
<dbReference type="SUPFAM" id="SSF47323">
    <property type="entry name" value="Anticodon-binding domain of a subclass of class I aminoacyl-tRNA synthetases"/>
    <property type="match status" value="1"/>
</dbReference>
<dbReference type="SUPFAM" id="SSF52374">
    <property type="entry name" value="Nucleotidylyl transferase"/>
    <property type="match status" value="1"/>
</dbReference>
<dbReference type="SUPFAM" id="SSF50677">
    <property type="entry name" value="ValRS/IleRS/LeuRS editing domain"/>
    <property type="match status" value="1"/>
</dbReference>
<keyword id="KW-0030">Aminoacyl-tRNA synthetase</keyword>
<keyword id="KW-0067">ATP-binding</keyword>
<keyword id="KW-0963">Cytoplasm</keyword>
<keyword id="KW-0436">Ligase</keyword>
<keyword id="KW-0547">Nucleotide-binding</keyword>
<keyword id="KW-0648">Protein biosynthesis</keyword>
<keyword id="KW-1185">Reference proteome</keyword>
<reference key="1">
    <citation type="journal article" date="2001" name="Nucleic Acids Res.">
        <title>The complete genome sequence of the murine respiratory pathogen Mycoplasma pulmonis.</title>
        <authorList>
            <person name="Chambaud I."/>
            <person name="Heilig R."/>
            <person name="Ferris S."/>
            <person name="Barbe V."/>
            <person name="Samson D."/>
            <person name="Galisson F."/>
            <person name="Moszer I."/>
            <person name="Dybvig K."/>
            <person name="Wroblewski H."/>
            <person name="Viari A."/>
            <person name="Rocha E.P.C."/>
            <person name="Blanchard A."/>
        </authorList>
    </citation>
    <scope>NUCLEOTIDE SEQUENCE [LARGE SCALE GENOMIC DNA]</scope>
    <source>
        <strain>UAB CTIP</strain>
    </source>
</reference>
<gene>
    <name evidence="1" type="primary">leuS</name>
    <name type="ordered locus">MYPU_0930</name>
</gene>